<organism evidence="10">
    <name type="scientific">Arabidopsis thaliana</name>
    <name type="common">Mouse-ear cress</name>
    <dbReference type="NCBI Taxonomy" id="3702"/>
    <lineage>
        <taxon>Eukaryota</taxon>
        <taxon>Viridiplantae</taxon>
        <taxon>Streptophyta</taxon>
        <taxon>Embryophyta</taxon>
        <taxon>Tracheophyta</taxon>
        <taxon>Spermatophyta</taxon>
        <taxon>Magnoliopsida</taxon>
        <taxon>eudicotyledons</taxon>
        <taxon>Gunneridae</taxon>
        <taxon>Pentapetalae</taxon>
        <taxon>rosids</taxon>
        <taxon>malvids</taxon>
        <taxon>Brassicales</taxon>
        <taxon>Brassicaceae</taxon>
        <taxon>Camelineae</taxon>
        <taxon>Arabidopsis</taxon>
    </lineage>
</organism>
<protein>
    <recommendedName>
        <fullName evidence="5">Probable myosin-binding protein 4</fullName>
    </recommendedName>
</protein>
<proteinExistence type="inferred from homology"/>
<accession>F4INW9</accession>
<accession>O49334</accession>
<gene>
    <name evidence="5" type="primary">MYOB4</name>
    <name evidence="8" type="ordered locus">At2g30690</name>
    <name evidence="9" type="ORF">T11J7.8</name>
</gene>
<dbReference type="EMBL" id="AC002340">
    <property type="protein sequence ID" value="AAC02740.1"/>
    <property type="status" value="ALT_SEQ"/>
    <property type="molecule type" value="Genomic_DNA"/>
</dbReference>
<dbReference type="EMBL" id="CP002685">
    <property type="protein sequence ID" value="AEC08427.1"/>
    <property type="molecule type" value="Genomic_DNA"/>
</dbReference>
<dbReference type="EMBL" id="CP002685">
    <property type="protein sequence ID" value="ANM61398.1"/>
    <property type="molecule type" value="Genomic_DNA"/>
</dbReference>
<dbReference type="PIR" id="E84711">
    <property type="entry name" value="E84711"/>
</dbReference>
<dbReference type="RefSeq" id="NP_001318321.1">
    <property type="nucleotide sequence ID" value="NM_001336280.1"/>
</dbReference>
<dbReference type="RefSeq" id="NP_180627.2">
    <property type="nucleotide sequence ID" value="NM_128621.3"/>
</dbReference>
<dbReference type="SMR" id="F4INW9"/>
<dbReference type="STRING" id="3702.F4INW9"/>
<dbReference type="iPTMnet" id="F4INW9"/>
<dbReference type="PaxDb" id="3702-AT2G30690.1"/>
<dbReference type="ProteomicsDB" id="251310"/>
<dbReference type="EnsemblPlants" id="AT2G30690.1">
    <property type="protein sequence ID" value="AT2G30690.1"/>
    <property type="gene ID" value="AT2G30690"/>
</dbReference>
<dbReference type="EnsemblPlants" id="AT2G30690.2">
    <property type="protein sequence ID" value="AT2G30690.2"/>
    <property type="gene ID" value="AT2G30690"/>
</dbReference>
<dbReference type="GeneID" id="817619"/>
<dbReference type="Gramene" id="AT2G30690.1">
    <property type="protein sequence ID" value="AT2G30690.1"/>
    <property type="gene ID" value="AT2G30690"/>
</dbReference>
<dbReference type="Gramene" id="AT2G30690.2">
    <property type="protein sequence ID" value="AT2G30690.2"/>
    <property type="gene ID" value="AT2G30690"/>
</dbReference>
<dbReference type="KEGG" id="ath:AT2G30690"/>
<dbReference type="Araport" id="AT2G30690"/>
<dbReference type="TAIR" id="AT2G30690">
    <property type="gene designation" value="MYOB4"/>
</dbReference>
<dbReference type="eggNOG" id="ENOG502QPSJ">
    <property type="taxonomic scope" value="Eukaryota"/>
</dbReference>
<dbReference type="HOGENOM" id="CLU_009392_2_0_1"/>
<dbReference type="InParanoid" id="F4INW9"/>
<dbReference type="OMA" id="MCDECLA"/>
<dbReference type="PRO" id="PR:F4INW9"/>
<dbReference type="Proteomes" id="UP000006548">
    <property type="component" value="Chromosome 2"/>
</dbReference>
<dbReference type="ExpressionAtlas" id="F4INW9">
    <property type="expression patterns" value="baseline and differential"/>
</dbReference>
<dbReference type="GO" id="GO:0012505">
    <property type="term" value="C:endomembrane system"/>
    <property type="evidence" value="ECO:0007669"/>
    <property type="project" value="UniProtKB-SubCell"/>
</dbReference>
<dbReference type="GO" id="GO:0016020">
    <property type="term" value="C:membrane"/>
    <property type="evidence" value="ECO:0007669"/>
    <property type="project" value="UniProtKB-KW"/>
</dbReference>
<dbReference type="GO" id="GO:0080115">
    <property type="term" value="F:myosin XI tail binding"/>
    <property type="evidence" value="ECO:0000314"/>
    <property type="project" value="TAIR"/>
</dbReference>
<dbReference type="InterPro" id="IPR007656">
    <property type="entry name" value="GTD-bd"/>
</dbReference>
<dbReference type="InterPro" id="IPR039306">
    <property type="entry name" value="MYOB"/>
</dbReference>
<dbReference type="PANTHER" id="PTHR31448">
    <property type="entry name" value="MYOSIN-BINDING PROTEIN 2"/>
    <property type="match status" value="1"/>
</dbReference>
<dbReference type="PANTHER" id="PTHR31448:SF39">
    <property type="entry name" value="MYOSIN-BINDING PROTEIN 4-RELATED"/>
    <property type="match status" value="1"/>
</dbReference>
<dbReference type="Pfam" id="PF04576">
    <property type="entry name" value="Zein-binding"/>
    <property type="match status" value="1"/>
</dbReference>
<dbReference type="PROSITE" id="PS51775">
    <property type="entry name" value="GTD_BINDING"/>
    <property type="match status" value="1"/>
</dbReference>
<sequence>MDSNLIFDQKVINGFAPVLTYAACEWFLILLMFIDALLSYLLVWFARYCRLQMPCFLCSKLLHPLHWRFLLCRNHRSEVSSYMSCQNHGNNLADCRGMCDDCLLSFTKMTGPNPDMNRLLLGKLGYDLLSRSHFAHPRSCSCCNKPWRTRHHTQRLIRLGSRGRNSSSKPNIPAPRHLTRRGSGGSLKKMRDHIATSGSEYVDVGSRDGMAHVGYTELKIHSDSESEFLFSDDDAFLHITDFNVEPSEKRTHKSRRRKSFDDKKMSNHKQPVLQDNQYKKIHVEDNETVESSMLGYNLENRTRQKQPVKAKEHDDVLSELITMSEARPFLLGSPRKYAAGVVTQNENEAEVSGSSSPSGGEFLSPSAENGASREIRIQEHDDSSDFSQNITSSAMEIEEFEAAIEQKESDHMDVSGSVANEPSSDEENEVEGDSKPLISNNMSDSLEQEQSGEEESEVNENNVAEEYFSNEEEDEVNGHTEPLTSKSESGSFAEEQSSEDEDGSNIYSVAKDHSSNEEDVDNEESEPMTSNNVTGVVKEEHSAKEEHGDHEETEPLTSLNISKEEPSLEHSDKDSLKITETRNTSNGSPELKHSASVESFVSISSDIEGESLVEVLKQQLEHGRKSLRDLNKEFEEERNASAIATNQAMAMITRLQEEKAALHMEALQYLRMMDEQAEHDMDALERANDVLADREKEIQDLEMELEYYRVKYPDEPREEILASMGILGNTEETNVTSPTDETSIKDSTDTKLTGSPSAEN</sequence>
<comment type="function">
    <text evidence="7">Membrane-anchored myosin receptors that define a distinct, plant-specific transport vesicle compartment.</text>
</comment>
<comment type="subcellular location">
    <subcellularLocation>
        <location evidence="7">Endomembrane system</location>
        <topology evidence="1">Single-pass membrane protein</topology>
    </subcellularLocation>
</comment>
<comment type="disruption phenotype">
    <text evidence="4">No visible phenotype. Myob1, myob2, myob3 and myob4 quadruple mutant has a significant height reduction, a reduced rosette diameter and a delayed flowering.</text>
</comment>
<comment type="sequence caution" evidence="6">
    <conflict type="erroneous gene model prediction">
        <sequence resource="EMBL-CDS" id="AAC02740"/>
    </conflict>
</comment>
<evidence type="ECO:0000255" key="1"/>
<evidence type="ECO:0000255" key="2">
    <source>
        <dbReference type="PROSITE-ProRule" id="PRU01111"/>
    </source>
</evidence>
<evidence type="ECO:0000256" key="3">
    <source>
        <dbReference type="SAM" id="MobiDB-lite"/>
    </source>
</evidence>
<evidence type="ECO:0000269" key="4">
    <source>
    </source>
</evidence>
<evidence type="ECO:0000303" key="5">
    <source>
    </source>
</evidence>
<evidence type="ECO:0000305" key="6"/>
<evidence type="ECO:0000305" key="7">
    <source>
    </source>
</evidence>
<evidence type="ECO:0000312" key="8">
    <source>
        <dbReference type="Araport" id="AT2G30690"/>
    </source>
</evidence>
<evidence type="ECO:0000312" key="9">
    <source>
        <dbReference type="EMBL" id="AAC02740.1"/>
    </source>
</evidence>
<evidence type="ECO:0000312" key="10">
    <source>
        <dbReference type="Proteomes" id="UP000006548"/>
    </source>
</evidence>
<feature type="chain" id="PRO_0000431710" description="Probable myosin-binding protein 4">
    <location>
        <begin position="1"/>
        <end position="760"/>
    </location>
</feature>
<feature type="transmembrane region" description="Helical" evidence="1">
    <location>
        <begin position="26"/>
        <end position="46"/>
    </location>
</feature>
<feature type="domain" description="GTD-binding" evidence="2">
    <location>
        <begin position="611"/>
        <end position="709"/>
    </location>
</feature>
<feature type="region of interest" description="Disordered" evidence="3">
    <location>
        <begin position="161"/>
        <end position="189"/>
    </location>
</feature>
<feature type="region of interest" description="Disordered" evidence="3">
    <location>
        <begin position="247"/>
        <end position="273"/>
    </location>
</feature>
<feature type="region of interest" description="Disordered" evidence="3">
    <location>
        <begin position="292"/>
        <end position="311"/>
    </location>
</feature>
<feature type="region of interest" description="Disordered" evidence="3">
    <location>
        <begin position="348"/>
        <end position="595"/>
    </location>
</feature>
<feature type="region of interest" description="Disordered" evidence="3">
    <location>
        <begin position="725"/>
        <end position="760"/>
    </location>
</feature>
<feature type="coiled-coil region" evidence="1">
    <location>
        <begin position="388"/>
        <end position="416"/>
    </location>
</feature>
<feature type="compositionally biased region" description="Low complexity" evidence="3">
    <location>
        <begin position="352"/>
        <end position="366"/>
    </location>
</feature>
<feature type="compositionally biased region" description="Basic and acidic residues" evidence="3">
    <location>
        <begin position="371"/>
        <end position="383"/>
    </location>
</feature>
<feature type="compositionally biased region" description="Polar residues" evidence="3">
    <location>
        <begin position="385"/>
        <end position="394"/>
    </location>
</feature>
<feature type="compositionally biased region" description="Basic and acidic residues" evidence="3">
    <location>
        <begin position="404"/>
        <end position="413"/>
    </location>
</feature>
<feature type="compositionally biased region" description="Acidic residues" evidence="3">
    <location>
        <begin position="446"/>
        <end position="458"/>
    </location>
</feature>
<feature type="compositionally biased region" description="Acidic residues" evidence="3">
    <location>
        <begin position="517"/>
        <end position="526"/>
    </location>
</feature>
<feature type="compositionally biased region" description="Basic and acidic residues" evidence="3">
    <location>
        <begin position="537"/>
        <end position="550"/>
    </location>
</feature>
<feature type="compositionally biased region" description="Basic and acidic residues" evidence="3">
    <location>
        <begin position="562"/>
        <end position="580"/>
    </location>
</feature>
<feature type="compositionally biased region" description="Polar residues" evidence="3">
    <location>
        <begin position="730"/>
        <end position="741"/>
    </location>
</feature>
<feature type="compositionally biased region" description="Polar residues" evidence="3">
    <location>
        <begin position="750"/>
        <end position="760"/>
    </location>
</feature>
<keyword id="KW-0175">Coiled coil</keyword>
<keyword id="KW-0472">Membrane</keyword>
<keyword id="KW-1185">Reference proteome</keyword>
<keyword id="KW-0812">Transmembrane</keyword>
<keyword id="KW-1133">Transmembrane helix</keyword>
<name>MYOB4_ARATH</name>
<reference key="1">
    <citation type="journal article" date="1999" name="Nature">
        <title>Sequence and analysis of chromosome 2 of the plant Arabidopsis thaliana.</title>
        <authorList>
            <person name="Lin X."/>
            <person name="Kaul S."/>
            <person name="Rounsley S.D."/>
            <person name="Shea T.P."/>
            <person name="Benito M.-I."/>
            <person name="Town C.D."/>
            <person name="Fujii C.Y."/>
            <person name="Mason T.M."/>
            <person name="Bowman C.L."/>
            <person name="Barnstead M.E."/>
            <person name="Feldblyum T.V."/>
            <person name="Buell C.R."/>
            <person name="Ketchum K.A."/>
            <person name="Lee J.J."/>
            <person name="Ronning C.M."/>
            <person name="Koo H.L."/>
            <person name="Moffat K.S."/>
            <person name="Cronin L.A."/>
            <person name="Shen M."/>
            <person name="Pai G."/>
            <person name="Van Aken S."/>
            <person name="Umayam L."/>
            <person name="Tallon L.J."/>
            <person name="Gill J.E."/>
            <person name="Adams M.D."/>
            <person name="Carrera A.J."/>
            <person name="Creasy T.H."/>
            <person name="Goodman H.M."/>
            <person name="Somerville C.R."/>
            <person name="Copenhaver G.P."/>
            <person name="Preuss D."/>
            <person name="Nierman W.C."/>
            <person name="White O."/>
            <person name="Eisen J.A."/>
            <person name="Salzberg S.L."/>
            <person name="Fraser C.M."/>
            <person name="Venter J.C."/>
        </authorList>
    </citation>
    <scope>NUCLEOTIDE SEQUENCE [LARGE SCALE GENOMIC DNA]</scope>
    <source>
        <strain>cv. Columbia</strain>
    </source>
</reference>
<reference key="2">
    <citation type="journal article" date="2017" name="Plant J.">
        <title>Araport11: a complete reannotation of the Arabidopsis thaliana reference genome.</title>
        <authorList>
            <person name="Cheng C.Y."/>
            <person name="Krishnakumar V."/>
            <person name="Chan A.P."/>
            <person name="Thibaud-Nissen F."/>
            <person name="Schobel S."/>
            <person name="Town C.D."/>
        </authorList>
    </citation>
    <scope>GENOME REANNOTATION</scope>
    <source>
        <strain>cv. Columbia</strain>
    </source>
</reference>
<reference key="3">
    <citation type="journal article" date="2013" name="Plant Cell">
        <title>Identification of myosin XI receptors in Arabidopsis defines a distinct class of transport vesicles.</title>
        <authorList>
            <person name="Peremyslov V.V."/>
            <person name="Morgun E.A."/>
            <person name="Kurth E.G."/>
            <person name="Makarova K.S."/>
            <person name="Koonin E.V."/>
            <person name="Dolja V.V."/>
        </authorList>
    </citation>
    <scope>DISRUPTION PHENOTYPE</scope>
</reference>